<proteinExistence type="inferred from homology"/>
<comment type="catalytic activity">
    <reaction evidence="1">
        <text>L-arginine + H2O = L-citrulline + NH4(+)</text>
        <dbReference type="Rhea" id="RHEA:19597"/>
        <dbReference type="ChEBI" id="CHEBI:15377"/>
        <dbReference type="ChEBI" id="CHEBI:28938"/>
        <dbReference type="ChEBI" id="CHEBI:32682"/>
        <dbReference type="ChEBI" id="CHEBI:57743"/>
        <dbReference type="EC" id="3.5.3.6"/>
    </reaction>
</comment>
<comment type="pathway">
    <text evidence="1">Amino-acid degradation; L-arginine degradation via ADI pathway; carbamoyl phosphate from L-arginine: step 1/2.</text>
</comment>
<comment type="subcellular location">
    <subcellularLocation>
        <location evidence="1">Cytoplasm</location>
    </subcellularLocation>
</comment>
<comment type="similarity">
    <text evidence="1">Belongs to the arginine deiminase family.</text>
</comment>
<reference key="1">
    <citation type="journal article" date="2010" name="Genome Biol.">
        <title>Structure and dynamics of the pan-genome of Streptococcus pneumoniae and closely related species.</title>
        <authorList>
            <person name="Donati C."/>
            <person name="Hiller N.L."/>
            <person name="Tettelin H."/>
            <person name="Muzzi A."/>
            <person name="Croucher N.J."/>
            <person name="Angiuoli S.V."/>
            <person name="Oggioni M."/>
            <person name="Dunning Hotopp J.C."/>
            <person name="Hu F.Z."/>
            <person name="Riley D.R."/>
            <person name="Covacci A."/>
            <person name="Mitchell T.J."/>
            <person name="Bentley S.D."/>
            <person name="Kilian M."/>
            <person name="Ehrlich G.D."/>
            <person name="Rappuoli R."/>
            <person name="Moxon E.R."/>
            <person name="Masignani V."/>
        </authorList>
    </citation>
    <scope>NUCLEOTIDE SEQUENCE [LARGE SCALE GENOMIC DNA]</scope>
    <source>
        <strain>Hungary19A-6</strain>
    </source>
</reference>
<gene>
    <name evidence="1" type="primary">arcA</name>
    <name type="ordered locus">SPH_2340</name>
</gene>
<keyword id="KW-0056">Arginine metabolism</keyword>
<keyword id="KW-0963">Cytoplasm</keyword>
<keyword id="KW-0378">Hydrolase</keyword>
<accession>B1I9W0</accession>
<name>ARCA_STRPI</name>
<sequence length="409" mass="46667">MSSHPIQVFSEIGKLKKVMLHRPGKELENLLPDYLERLLFDDIPFLEDAQKEHDAFAQALRDEGIEVLYLEQLAAESLTSPEIRDQFIEEYLDEANIRDRQTKVAIRELLHGIKDNQELVEKTMAGIQKVELPEIPDEAKDLTDLVESDYPFAIDPMPNLYFTRDPFATIGNAVSLNHMFADTRNRETLYGKYIFKYHPIYGGKVDLVYNREEDTRIEGGDELILSKDVLAVGISQRTDAASIEKLLVNIFKKNVGFKKVLAFEFANNRKFMHLDTVFTMVDYDKFTIHPEIEGDLHVYSVTYENEKLKIVEEKGDLAELLAQNLGVEKVHLIRCGGGNIVAAAREQWNDGSNTLTIAPGVVVVYDRNTVTNKILEEYGLRLIKIRGSELVRGRGGPRCMSMPFEREEV</sequence>
<protein>
    <recommendedName>
        <fullName evidence="1">Arginine deiminase</fullName>
        <shortName evidence="1">ADI</shortName>
        <ecNumber evidence="1">3.5.3.6</ecNumber>
    </recommendedName>
    <alternativeName>
        <fullName evidence="1">Arginine dihydrolase</fullName>
        <shortName evidence="1">AD</shortName>
    </alternativeName>
</protein>
<organism>
    <name type="scientific">Streptococcus pneumoniae (strain Hungary19A-6)</name>
    <dbReference type="NCBI Taxonomy" id="487214"/>
    <lineage>
        <taxon>Bacteria</taxon>
        <taxon>Bacillati</taxon>
        <taxon>Bacillota</taxon>
        <taxon>Bacilli</taxon>
        <taxon>Lactobacillales</taxon>
        <taxon>Streptococcaceae</taxon>
        <taxon>Streptococcus</taxon>
    </lineage>
</organism>
<evidence type="ECO:0000255" key="1">
    <source>
        <dbReference type="HAMAP-Rule" id="MF_00242"/>
    </source>
</evidence>
<feature type="chain" id="PRO_1000100747" description="Arginine deiminase">
    <location>
        <begin position="1"/>
        <end position="409"/>
    </location>
</feature>
<feature type="active site" description="Amidino-cysteine intermediate" evidence="1">
    <location>
        <position position="399"/>
    </location>
</feature>
<dbReference type="EC" id="3.5.3.6" evidence="1"/>
<dbReference type="EMBL" id="CP000936">
    <property type="protein sequence ID" value="ACA36080.1"/>
    <property type="molecule type" value="Genomic_DNA"/>
</dbReference>
<dbReference type="RefSeq" id="WP_000094613.1">
    <property type="nucleotide sequence ID" value="NC_010380.1"/>
</dbReference>
<dbReference type="SMR" id="B1I9W0"/>
<dbReference type="KEGG" id="spv:SPH_2340"/>
<dbReference type="HOGENOM" id="CLU_052662_0_1_9"/>
<dbReference type="UniPathway" id="UPA00254">
    <property type="reaction ID" value="UER00364"/>
</dbReference>
<dbReference type="Proteomes" id="UP000002163">
    <property type="component" value="Chromosome"/>
</dbReference>
<dbReference type="GO" id="GO:0005737">
    <property type="term" value="C:cytoplasm"/>
    <property type="evidence" value="ECO:0007669"/>
    <property type="project" value="UniProtKB-SubCell"/>
</dbReference>
<dbReference type="GO" id="GO:0016990">
    <property type="term" value="F:arginine deiminase activity"/>
    <property type="evidence" value="ECO:0007669"/>
    <property type="project" value="UniProtKB-UniRule"/>
</dbReference>
<dbReference type="GO" id="GO:0019547">
    <property type="term" value="P:arginine catabolic process to ornithine"/>
    <property type="evidence" value="ECO:0007669"/>
    <property type="project" value="UniProtKB-UniRule"/>
</dbReference>
<dbReference type="GO" id="GO:0019546">
    <property type="term" value="P:arginine deiminase pathway"/>
    <property type="evidence" value="ECO:0007669"/>
    <property type="project" value="TreeGrafter"/>
</dbReference>
<dbReference type="FunFam" id="1.10.3930.10:FF:000003">
    <property type="entry name" value="Arginine deiminase"/>
    <property type="match status" value="1"/>
</dbReference>
<dbReference type="Gene3D" id="1.10.3930.10">
    <property type="entry name" value="Arginine deiminase"/>
    <property type="match status" value="1"/>
</dbReference>
<dbReference type="Gene3D" id="3.75.10.10">
    <property type="entry name" value="L-arginine/glycine Amidinotransferase, Chain A"/>
    <property type="match status" value="1"/>
</dbReference>
<dbReference type="HAMAP" id="MF_00242">
    <property type="entry name" value="Arg_deiminase"/>
    <property type="match status" value="1"/>
</dbReference>
<dbReference type="InterPro" id="IPR003876">
    <property type="entry name" value="Arg_deiminase"/>
</dbReference>
<dbReference type="NCBIfam" id="TIGR01078">
    <property type="entry name" value="arcA"/>
    <property type="match status" value="1"/>
</dbReference>
<dbReference type="NCBIfam" id="NF002381">
    <property type="entry name" value="PRK01388.1"/>
    <property type="match status" value="1"/>
</dbReference>
<dbReference type="PANTHER" id="PTHR47271">
    <property type="entry name" value="ARGININE DEIMINASE"/>
    <property type="match status" value="1"/>
</dbReference>
<dbReference type="PANTHER" id="PTHR47271:SF2">
    <property type="entry name" value="ARGININE DEIMINASE"/>
    <property type="match status" value="1"/>
</dbReference>
<dbReference type="Pfam" id="PF02274">
    <property type="entry name" value="ADI"/>
    <property type="match status" value="1"/>
</dbReference>
<dbReference type="PIRSF" id="PIRSF006356">
    <property type="entry name" value="Arg_deiminase"/>
    <property type="match status" value="1"/>
</dbReference>
<dbReference type="PRINTS" id="PR01466">
    <property type="entry name" value="ARGDEIMINASE"/>
</dbReference>
<dbReference type="SUPFAM" id="SSF55909">
    <property type="entry name" value="Pentein"/>
    <property type="match status" value="1"/>
</dbReference>